<reference key="1">
    <citation type="journal article" date="2007" name="BMC Plant Biol.">
        <title>Complete DNA sequences of the plastid genomes of two parasitic flowering plant species, Cuscuta reflexa and Cuscuta gronovii.</title>
        <authorList>
            <person name="Funk H.T."/>
            <person name="Berg S."/>
            <person name="Krupinska K."/>
            <person name="Maier U.-G."/>
            <person name="Krause K."/>
        </authorList>
    </citation>
    <scope>NUCLEOTIDE SEQUENCE [LARGE SCALE GENOMIC DNA]</scope>
</reference>
<feature type="chain" id="PRO_0000353557" description="DNA-directed RNA polymerase subunit beta''">
    <location>
        <begin position="1"/>
        <end position="1379"/>
    </location>
</feature>
<feature type="binding site" evidence="1">
    <location>
        <position position="220"/>
    </location>
    <ligand>
        <name>Zn(2+)</name>
        <dbReference type="ChEBI" id="CHEBI:29105"/>
    </ligand>
</feature>
<feature type="binding site" evidence="1">
    <location>
        <position position="291"/>
    </location>
    <ligand>
        <name>Zn(2+)</name>
        <dbReference type="ChEBI" id="CHEBI:29105"/>
    </ligand>
</feature>
<feature type="binding site" evidence="1">
    <location>
        <position position="298"/>
    </location>
    <ligand>
        <name>Zn(2+)</name>
        <dbReference type="ChEBI" id="CHEBI:29105"/>
    </ligand>
</feature>
<feature type="binding site" evidence="1">
    <location>
        <position position="301"/>
    </location>
    <ligand>
        <name>Zn(2+)</name>
        <dbReference type="ChEBI" id="CHEBI:29105"/>
    </ligand>
</feature>
<dbReference type="EC" id="2.7.7.6" evidence="1"/>
<dbReference type="EMBL" id="AM711640">
    <property type="protein sequence ID" value="CAM98384.1"/>
    <property type="molecule type" value="Genomic_DNA"/>
</dbReference>
<dbReference type="RefSeq" id="YP_001430098.1">
    <property type="nucleotide sequence ID" value="NC_009766.1"/>
</dbReference>
<dbReference type="SMR" id="A7M956"/>
<dbReference type="GeneID" id="5536697"/>
<dbReference type="GO" id="GO:0000428">
    <property type="term" value="C:DNA-directed RNA polymerase complex"/>
    <property type="evidence" value="ECO:0007669"/>
    <property type="project" value="UniProtKB-KW"/>
</dbReference>
<dbReference type="GO" id="GO:0005739">
    <property type="term" value="C:mitochondrion"/>
    <property type="evidence" value="ECO:0007669"/>
    <property type="project" value="GOC"/>
</dbReference>
<dbReference type="GO" id="GO:0009536">
    <property type="term" value="C:plastid"/>
    <property type="evidence" value="ECO:0007669"/>
    <property type="project" value="UniProtKB-SubCell"/>
</dbReference>
<dbReference type="GO" id="GO:0003677">
    <property type="term" value="F:DNA binding"/>
    <property type="evidence" value="ECO:0007669"/>
    <property type="project" value="InterPro"/>
</dbReference>
<dbReference type="GO" id="GO:0003899">
    <property type="term" value="F:DNA-directed RNA polymerase activity"/>
    <property type="evidence" value="ECO:0007669"/>
    <property type="project" value="UniProtKB-EC"/>
</dbReference>
<dbReference type="GO" id="GO:0046872">
    <property type="term" value="F:metal ion binding"/>
    <property type="evidence" value="ECO:0007669"/>
    <property type="project" value="UniProtKB-KW"/>
</dbReference>
<dbReference type="GO" id="GO:0006351">
    <property type="term" value="P:DNA-templated transcription"/>
    <property type="evidence" value="ECO:0007669"/>
    <property type="project" value="InterPro"/>
</dbReference>
<dbReference type="CDD" id="cd02655">
    <property type="entry name" value="RNAP_beta'_C"/>
    <property type="match status" value="1"/>
</dbReference>
<dbReference type="FunFam" id="1.10.132.30:FF:000002">
    <property type="entry name" value="DNA-directed RNA polymerase subunit beta"/>
    <property type="match status" value="1"/>
</dbReference>
<dbReference type="Gene3D" id="1.10.132.30">
    <property type="match status" value="1"/>
</dbReference>
<dbReference type="Gene3D" id="1.10.150.390">
    <property type="match status" value="1"/>
</dbReference>
<dbReference type="Gene3D" id="1.10.1790.20">
    <property type="match status" value="1"/>
</dbReference>
<dbReference type="Gene3D" id="1.10.274.100">
    <property type="entry name" value="RNA polymerase Rpb1, domain 3"/>
    <property type="match status" value="1"/>
</dbReference>
<dbReference type="HAMAP" id="MF_01324">
    <property type="entry name" value="RNApol_bact_RpoC2"/>
    <property type="match status" value="1"/>
</dbReference>
<dbReference type="InterPro" id="IPR012756">
    <property type="entry name" value="DNA-dir_RpoC2_beta_pp"/>
</dbReference>
<dbReference type="InterPro" id="IPR050254">
    <property type="entry name" value="RNA_pol_beta''_euk"/>
</dbReference>
<dbReference type="InterPro" id="IPR042102">
    <property type="entry name" value="RNA_pol_Rpb1_3_sf"/>
</dbReference>
<dbReference type="InterPro" id="IPR007083">
    <property type="entry name" value="RNA_pol_Rpb1_4"/>
</dbReference>
<dbReference type="InterPro" id="IPR007081">
    <property type="entry name" value="RNA_pol_Rpb1_5"/>
</dbReference>
<dbReference type="InterPro" id="IPR038120">
    <property type="entry name" value="Rpb1_funnel_sf"/>
</dbReference>
<dbReference type="NCBIfam" id="TIGR02388">
    <property type="entry name" value="rpoC2_cyan"/>
    <property type="match status" value="1"/>
</dbReference>
<dbReference type="PANTHER" id="PTHR34995">
    <property type="entry name" value="DNA-DIRECTED RNA POLYMERASE SUBUNIT BETA"/>
    <property type="match status" value="1"/>
</dbReference>
<dbReference type="PANTHER" id="PTHR34995:SF1">
    <property type="entry name" value="DNA-DIRECTED RNA POLYMERASE SUBUNIT BETA"/>
    <property type="match status" value="1"/>
</dbReference>
<dbReference type="Pfam" id="PF05000">
    <property type="entry name" value="RNA_pol_Rpb1_4"/>
    <property type="match status" value="1"/>
</dbReference>
<dbReference type="Pfam" id="PF04998">
    <property type="entry name" value="RNA_pol_Rpb1_5"/>
    <property type="match status" value="2"/>
</dbReference>
<dbReference type="SUPFAM" id="SSF64484">
    <property type="entry name" value="beta and beta-prime subunits of DNA dependent RNA-polymerase"/>
    <property type="match status" value="1"/>
</dbReference>
<evidence type="ECO:0000255" key="1">
    <source>
        <dbReference type="HAMAP-Rule" id="MF_01324"/>
    </source>
</evidence>
<evidence type="ECO:0000305" key="2"/>
<accession>A7M956</accession>
<sequence>MAERINLVFHNKVLDGTAMKRLISRLIDHFGMAYTSHILDQVKTLGFQQATATSISLGIDDLLTIPSKGWLVQDAEQQSFVFEKYQHSGNVHAVEKLRQSIEIWYATSEYLRQEMHLNFRMTDPLNPVHIMSFSGARGNASQVHQLVGMRGLMSDPQGQMIDLPIQSNLREGLSLTEYIISCYGARKGVVDTAVRTSDAGYLTRRLVEVVQHIVVRRADCGTARGISVSPHNGMMPERIFIQTLIGRVLADDIYIGPRCIATRNQNIGVGLVNKLLNFRAQPISIRTPFTCRSTSWICRLCYGRSPTHGDLVELGEAVGIIAGQSIGEPGTQLTLRTFHTGGVFTGGTAEHVRAPSNGKIRFTEDLVHPTRTRHGYPAFFCSIYLYVTIQSQDILHHVKIPPKSFILVQNDQYVESEQVIAETRAGASTLNYKEKIRKHIYSDSGGEMHWSTNVYHAPEFTYGNVHLLSKTSHLWILLGEPCHSSLVSTSIHRDQDQMSAQSLSVKRRYTSKLSETNDEAKQKIASEDLIADYSDVNPSRCTDHYNLVYPAILPILDENSYFFSNCLSKRRRNQFIIPLQSIQEHKNQLMPCSSISMKIPPNANGIFCANSILAYFDDPRYRRNNSGSTKYGTLEMYSTIKKEDFIQYRGVNEFRLKSKVERFFFIPEEVHILPGSSSIMVRNQSLIGVDTQITLNLRSRVGGLVWVERKKNRIELKIFFGDIYFPGGADNLSRHSGVLIPPGTEIKTNYKESKKVKNWIYVQRITLSKKKFFFLVRPLVTYEIMDGIPLATLFPPDLLQQRENAQLRVVNYILHGNGKPIRGNYDASIQLVRTCLVFKRNQDKKSSYSEAARASVVEIRTNYLIRHFLRIDFVKAPISYIGKRYDPLGLGLLAEDWTHKNPYSKARIHQNLNQNKGTIHTFFNRNKGSQSLIILSSSNCSRMDPANGAKSNNVIQESKKEEYPMLQISNSLGPLGTYPPIANCDSFNRLLTHNQILVTNYFHLDNVKPPFQVFKFKYYFIAENLKICNYNPCSNLRLNAFYLNLNFLHPNSCAETSKIMSLGQFICQNVCIDKTRPPFKSGQVIFIQVDSVVIRLAKPYLATPGATVHGLYGETFFGGDTVVTFNYEKSRSGDITQGLPKVEQVLEVRSVDSISMNLEGRVEGWGKCITGILGIPWGFLIGAELTIVQSRISLVNKIQKVYRFQGVHIHNRHIEIIVRQITSKVLVSEDGMSNVFLPGELIGLLRAERMGRALEEPIHYRSVFLGITKASLNTQSFISEASFQETARVLSKAALGGRIDWLKGLKENVVLGGVIPAGTGFRGLVDPSKQYNKNNIPLKNNLFEGGMTDLLVHHRKLFDSFLNTLIYHHHRIDRFYNDS</sequence>
<comment type="function">
    <text evidence="1">DNA-dependent RNA polymerase catalyzes the transcription of DNA into RNA using the four ribonucleoside triphosphates as substrates.</text>
</comment>
<comment type="catalytic activity">
    <reaction evidence="1">
        <text>RNA(n) + a ribonucleoside 5'-triphosphate = RNA(n+1) + diphosphate</text>
        <dbReference type="Rhea" id="RHEA:21248"/>
        <dbReference type="Rhea" id="RHEA-COMP:14527"/>
        <dbReference type="Rhea" id="RHEA-COMP:17342"/>
        <dbReference type="ChEBI" id="CHEBI:33019"/>
        <dbReference type="ChEBI" id="CHEBI:61557"/>
        <dbReference type="ChEBI" id="CHEBI:140395"/>
        <dbReference type="EC" id="2.7.7.6"/>
    </reaction>
</comment>
<comment type="cofactor">
    <cofactor evidence="1">
        <name>Zn(2+)</name>
        <dbReference type="ChEBI" id="CHEBI:29105"/>
    </cofactor>
    <text evidence="1">Binds 1 Zn(2+) ion per subunit.</text>
</comment>
<comment type="subunit">
    <text evidence="1">In plastids the minimal PEP RNA polymerase catalytic core is composed of four subunits: alpha, beta, beta', and beta''. When a (nuclear-encoded) sigma factor is associated with the core the holoenzyme is formed, which can initiate transcription.</text>
</comment>
<comment type="subcellular location">
    <subcellularLocation>
        <location>Plastid</location>
    </subcellularLocation>
</comment>
<comment type="similarity">
    <text evidence="1">Belongs to the RNA polymerase beta' chain family. RpoC2 subfamily.</text>
</comment>
<comment type="caution">
    <text evidence="2">Young tissue from this organism is photosynthetic and contains some thylakoids, although the photosynthetic activity does not exceed the light compensation point.</text>
</comment>
<name>RPOC2_CUSRE</name>
<protein>
    <recommendedName>
        <fullName evidence="1">DNA-directed RNA polymerase subunit beta''</fullName>
        <ecNumber evidence="1">2.7.7.6</ecNumber>
    </recommendedName>
    <alternativeName>
        <fullName evidence="1">PEP</fullName>
    </alternativeName>
    <alternativeName>
        <fullName evidence="1">Plastid-encoded RNA polymerase subunit beta''</fullName>
        <shortName evidence="1">RNA polymerase subunit beta''</shortName>
    </alternativeName>
</protein>
<proteinExistence type="inferred from homology"/>
<keyword id="KW-0240">DNA-directed RNA polymerase</keyword>
<keyword id="KW-0479">Metal-binding</keyword>
<keyword id="KW-0548">Nucleotidyltransferase</keyword>
<keyword id="KW-0934">Plastid</keyword>
<keyword id="KW-0804">Transcription</keyword>
<keyword id="KW-0808">Transferase</keyword>
<keyword id="KW-0862">Zinc</keyword>
<geneLocation type="plastid"/>
<organism>
    <name type="scientific">Cuscuta reflexa</name>
    <name type="common">Southern Asian dodder</name>
    <dbReference type="NCBI Taxonomy" id="4129"/>
    <lineage>
        <taxon>Eukaryota</taxon>
        <taxon>Viridiplantae</taxon>
        <taxon>Streptophyta</taxon>
        <taxon>Embryophyta</taxon>
        <taxon>Tracheophyta</taxon>
        <taxon>Spermatophyta</taxon>
        <taxon>Magnoliopsida</taxon>
        <taxon>eudicotyledons</taxon>
        <taxon>Gunneridae</taxon>
        <taxon>Pentapetalae</taxon>
        <taxon>asterids</taxon>
        <taxon>lamiids</taxon>
        <taxon>Solanales</taxon>
        <taxon>Convolvulaceae</taxon>
        <taxon>Cuscuteae</taxon>
        <taxon>Cuscuta</taxon>
        <taxon>Cuscuta subgen. Monogynella</taxon>
    </lineage>
</organism>
<gene>
    <name evidence="1" type="primary">rpoC2</name>
</gene>